<organism>
    <name type="scientific">Pediococcus pentosaceus (strain ATCC 25745 / CCUG 21536 / LMG 10740 / 183-1w)</name>
    <dbReference type="NCBI Taxonomy" id="278197"/>
    <lineage>
        <taxon>Bacteria</taxon>
        <taxon>Bacillati</taxon>
        <taxon>Bacillota</taxon>
        <taxon>Bacilli</taxon>
        <taxon>Lactobacillales</taxon>
        <taxon>Lactobacillaceae</taxon>
        <taxon>Pediococcus</taxon>
    </lineage>
</organism>
<reference key="1">
    <citation type="journal article" date="2006" name="Proc. Natl. Acad. Sci. U.S.A.">
        <title>Comparative genomics of the lactic acid bacteria.</title>
        <authorList>
            <person name="Makarova K.S."/>
            <person name="Slesarev A."/>
            <person name="Wolf Y.I."/>
            <person name="Sorokin A."/>
            <person name="Mirkin B."/>
            <person name="Koonin E.V."/>
            <person name="Pavlov A."/>
            <person name="Pavlova N."/>
            <person name="Karamychev V."/>
            <person name="Polouchine N."/>
            <person name="Shakhova V."/>
            <person name="Grigoriev I."/>
            <person name="Lou Y."/>
            <person name="Rohksar D."/>
            <person name="Lucas S."/>
            <person name="Huang K."/>
            <person name="Goodstein D.M."/>
            <person name="Hawkins T."/>
            <person name="Plengvidhya V."/>
            <person name="Welker D."/>
            <person name="Hughes J."/>
            <person name="Goh Y."/>
            <person name="Benson A."/>
            <person name="Baldwin K."/>
            <person name="Lee J.-H."/>
            <person name="Diaz-Muniz I."/>
            <person name="Dosti B."/>
            <person name="Smeianov V."/>
            <person name="Wechter W."/>
            <person name="Barabote R."/>
            <person name="Lorca G."/>
            <person name="Altermann E."/>
            <person name="Barrangou R."/>
            <person name="Ganesan B."/>
            <person name="Xie Y."/>
            <person name="Rawsthorne H."/>
            <person name="Tamir D."/>
            <person name="Parker C."/>
            <person name="Breidt F."/>
            <person name="Broadbent J.R."/>
            <person name="Hutkins R."/>
            <person name="O'Sullivan D."/>
            <person name="Steele J."/>
            <person name="Unlu G."/>
            <person name="Saier M.H. Jr."/>
            <person name="Klaenhammer T."/>
            <person name="Richardson P."/>
            <person name="Kozyavkin S."/>
            <person name="Weimer B.C."/>
            <person name="Mills D.A."/>
        </authorList>
    </citation>
    <scope>NUCLEOTIDE SEQUENCE [LARGE SCALE GENOMIC DNA]</scope>
    <source>
        <strain>ATCC 25745 / CCUG 21536 / LMG 10740 / 183-1w</strain>
    </source>
</reference>
<evidence type="ECO:0000255" key="1">
    <source>
        <dbReference type="HAMAP-Rule" id="MF_01371"/>
    </source>
</evidence>
<evidence type="ECO:0000305" key="2"/>
<protein>
    <recommendedName>
        <fullName evidence="1">Large ribosomal subunit protein uL30</fullName>
    </recommendedName>
    <alternativeName>
        <fullName evidence="2">50S ribosomal protein L30</fullName>
    </alternativeName>
</protein>
<accession>Q03ED4</accession>
<keyword id="KW-0687">Ribonucleoprotein</keyword>
<keyword id="KW-0689">Ribosomal protein</keyword>
<comment type="subunit">
    <text evidence="1">Part of the 50S ribosomal subunit.</text>
</comment>
<comment type="similarity">
    <text evidence="1">Belongs to the universal ribosomal protein uL30 family.</text>
</comment>
<dbReference type="EMBL" id="CP000422">
    <property type="protein sequence ID" value="ABJ68438.1"/>
    <property type="molecule type" value="Genomic_DNA"/>
</dbReference>
<dbReference type="RefSeq" id="WP_002833345.1">
    <property type="nucleotide sequence ID" value="NC_008525.1"/>
</dbReference>
<dbReference type="SMR" id="Q03ED4"/>
<dbReference type="STRING" id="278197.PEPE_1400"/>
<dbReference type="GeneID" id="33061488"/>
<dbReference type="KEGG" id="ppe:PEPE_1400"/>
<dbReference type="eggNOG" id="COG1841">
    <property type="taxonomic scope" value="Bacteria"/>
</dbReference>
<dbReference type="HOGENOM" id="CLU_131047_2_1_9"/>
<dbReference type="OrthoDB" id="9812790at2"/>
<dbReference type="Proteomes" id="UP000000773">
    <property type="component" value="Chromosome"/>
</dbReference>
<dbReference type="GO" id="GO:0022625">
    <property type="term" value="C:cytosolic large ribosomal subunit"/>
    <property type="evidence" value="ECO:0007669"/>
    <property type="project" value="TreeGrafter"/>
</dbReference>
<dbReference type="GO" id="GO:0003735">
    <property type="term" value="F:structural constituent of ribosome"/>
    <property type="evidence" value="ECO:0007669"/>
    <property type="project" value="InterPro"/>
</dbReference>
<dbReference type="GO" id="GO:0006412">
    <property type="term" value="P:translation"/>
    <property type="evidence" value="ECO:0007669"/>
    <property type="project" value="UniProtKB-UniRule"/>
</dbReference>
<dbReference type="CDD" id="cd01658">
    <property type="entry name" value="Ribosomal_L30"/>
    <property type="match status" value="1"/>
</dbReference>
<dbReference type="Gene3D" id="3.30.1390.20">
    <property type="entry name" value="Ribosomal protein L30, ferredoxin-like fold domain"/>
    <property type="match status" value="1"/>
</dbReference>
<dbReference type="HAMAP" id="MF_01371_B">
    <property type="entry name" value="Ribosomal_uL30_B"/>
    <property type="match status" value="1"/>
</dbReference>
<dbReference type="InterPro" id="IPR036919">
    <property type="entry name" value="Ribo_uL30_ferredoxin-like_sf"/>
</dbReference>
<dbReference type="InterPro" id="IPR005996">
    <property type="entry name" value="Ribosomal_uL30_bac-type"/>
</dbReference>
<dbReference type="InterPro" id="IPR016082">
    <property type="entry name" value="Ribosomal_uL30_ferredoxin-like"/>
</dbReference>
<dbReference type="NCBIfam" id="TIGR01308">
    <property type="entry name" value="rpmD_bact"/>
    <property type="match status" value="1"/>
</dbReference>
<dbReference type="PANTHER" id="PTHR15892:SF2">
    <property type="entry name" value="LARGE RIBOSOMAL SUBUNIT PROTEIN UL30M"/>
    <property type="match status" value="1"/>
</dbReference>
<dbReference type="PANTHER" id="PTHR15892">
    <property type="entry name" value="MITOCHONDRIAL RIBOSOMAL PROTEIN L30"/>
    <property type="match status" value="1"/>
</dbReference>
<dbReference type="Pfam" id="PF00327">
    <property type="entry name" value="Ribosomal_L30"/>
    <property type="match status" value="1"/>
</dbReference>
<dbReference type="PIRSF" id="PIRSF002211">
    <property type="entry name" value="Ribosomal_L30_bac-type"/>
    <property type="match status" value="1"/>
</dbReference>
<dbReference type="SUPFAM" id="SSF55129">
    <property type="entry name" value="Ribosomal protein L30p/L7e"/>
    <property type="match status" value="1"/>
</dbReference>
<gene>
    <name evidence="1" type="primary">rpmD</name>
    <name type="ordered locus">PEPE_1400</name>
</gene>
<feature type="chain" id="PRO_1000056087" description="Large ribosomal subunit protein uL30">
    <location>
        <begin position="1"/>
        <end position="60"/>
    </location>
</feature>
<name>RL30_PEDPA</name>
<sequence length="60" mass="6642">MSQLKVTLIKSAAHRLPKQRTIVKELGLGRVNSSVVLPNNEATRGAIFHIAHLIEVEEVK</sequence>
<proteinExistence type="inferred from homology"/>